<feature type="signal peptide" evidence="2">
    <location>
        <begin position="1"/>
        <end position="29"/>
    </location>
</feature>
<feature type="chain" id="PRO_0000379601" description="Defensin-like protein 18">
    <location>
        <begin position="30"/>
        <end position="80"/>
    </location>
</feature>
<feature type="disulfide bond" evidence="1">
    <location>
        <begin position="32"/>
        <end position="80"/>
    </location>
</feature>
<feature type="disulfide bond" evidence="1">
    <location>
        <begin position="43"/>
        <end position="64"/>
    </location>
</feature>
<feature type="disulfide bond" evidence="1">
    <location>
        <begin position="49"/>
        <end position="74"/>
    </location>
</feature>
<feature type="disulfide bond" evidence="1">
    <location>
        <begin position="53"/>
        <end position="76"/>
    </location>
</feature>
<organism>
    <name type="scientific">Arabidopsis thaliana</name>
    <name type="common">Mouse-ear cress</name>
    <dbReference type="NCBI Taxonomy" id="3702"/>
    <lineage>
        <taxon>Eukaryota</taxon>
        <taxon>Viridiplantae</taxon>
        <taxon>Streptophyta</taxon>
        <taxon>Embryophyta</taxon>
        <taxon>Tracheophyta</taxon>
        <taxon>Spermatophyta</taxon>
        <taxon>Magnoliopsida</taxon>
        <taxon>eudicotyledons</taxon>
        <taxon>Gunneridae</taxon>
        <taxon>Pentapetalae</taxon>
        <taxon>rosids</taxon>
        <taxon>malvids</taxon>
        <taxon>Brassicales</taxon>
        <taxon>Brassicaceae</taxon>
        <taxon>Camelineae</taxon>
        <taxon>Arabidopsis</taxon>
    </lineage>
</organism>
<name>DEF18_ARATH</name>
<protein>
    <recommendedName>
        <fullName>Defensin-like protein 18</fullName>
    </recommendedName>
    <alternativeName>
        <fullName>Cysteine-rich antifungal protein At1g55010</fullName>
    </alternativeName>
    <alternativeName>
        <fullName>Plant defensin 1.5</fullName>
    </alternativeName>
</protein>
<sequence length="80" mass="9139">MAKFCTTITLILVALVLFADFEAPTIVKAELCKRESETWSGRCVNDYQCRDHCINNDRGNDGYCAGGYPWYRSCFCFFSC</sequence>
<accession>Q9FZ31</accession>
<dbReference type="EMBL" id="AC064840">
    <property type="protein sequence ID" value="AAG00880.1"/>
    <property type="molecule type" value="Genomic_DNA"/>
</dbReference>
<dbReference type="EMBL" id="AC069144">
    <property type="protein sequence ID" value="AAG51104.1"/>
    <property type="molecule type" value="Genomic_DNA"/>
</dbReference>
<dbReference type="EMBL" id="CP002684">
    <property type="protein sequence ID" value="AEE33174.1"/>
    <property type="molecule type" value="Genomic_DNA"/>
</dbReference>
<dbReference type="PIR" id="F96591">
    <property type="entry name" value="F96591"/>
</dbReference>
<dbReference type="RefSeq" id="NP_175899.1">
    <property type="nucleotide sequence ID" value="NM_104375.2"/>
</dbReference>
<dbReference type="SMR" id="Q9FZ31"/>
<dbReference type="STRING" id="3702.Q9FZ31"/>
<dbReference type="PaxDb" id="3702-AT1G55010.1"/>
<dbReference type="EnsemblPlants" id="AT1G55010.1">
    <property type="protein sequence ID" value="AT1G55010.1"/>
    <property type="gene ID" value="AT1G55010"/>
</dbReference>
<dbReference type="GeneID" id="841943"/>
<dbReference type="Gramene" id="AT1G55010.1">
    <property type="protein sequence ID" value="AT1G55010.1"/>
    <property type="gene ID" value="AT1G55010"/>
</dbReference>
<dbReference type="KEGG" id="ath:AT1G55010"/>
<dbReference type="Araport" id="AT1G55010"/>
<dbReference type="TAIR" id="AT1G55010">
    <property type="gene designation" value="PDF1.5"/>
</dbReference>
<dbReference type="HOGENOM" id="CLU_161668_3_0_1"/>
<dbReference type="InParanoid" id="Q9FZ31"/>
<dbReference type="OrthoDB" id="1037779at2759"/>
<dbReference type="PhylomeDB" id="Q9FZ31"/>
<dbReference type="PRO" id="PR:Q9FZ31"/>
<dbReference type="Proteomes" id="UP000006548">
    <property type="component" value="Chromosome 1"/>
</dbReference>
<dbReference type="ExpressionAtlas" id="Q9FZ31">
    <property type="expression patterns" value="baseline and differential"/>
</dbReference>
<dbReference type="GO" id="GO:0005737">
    <property type="term" value="C:cytoplasm"/>
    <property type="evidence" value="ECO:0000314"/>
    <property type="project" value="TAIR"/>
</dbReference>
<dbReference type="GO" id="GO:0005576">
    <property type="term" value="C:extracellular region"/>
    <property type="evidence" value="ECO:0007669"/>
    <property type="project" value="UniProtKB-SubCell"/>
</dbReference>
<dbReference type="GO" id="GO:0009505">
    <property type="term" value="C:plant-type cell wall"/>
    <property type="evidence" value="ECO:0000314"/>
    <property type="project" value="TAIR"/>
</dbReference>
<dbReference type="GO" id="GO:0006952">
    <property type="term" value="P:defense response"/>
    <property type="evidence" value="ECO:0000250"/>
    <property type="project" value="TAIR"/>
</dbReference>
<dbReference type="GO" id="GO:0050832">
    <property type="term" value="P:defense response to fungus"/>
    <property type="evidence" value="ECO:0007669"/>
    <property type="project" value="UniProtKB-KW"/>
</dbReference>
<dbReference type="GO" id="GO:0031640">
    <property type="term" value="P:killing of cells of another organism"/>
    <property type="evidence" value="ECO:0007669"/>
    <property type="project" value="UniProtKB-KW"/>
</dbReference>
<dbReference type="FunFam" id="3.30.30.10:FF:000011">
    <property type="entry name" value="Plant defensin 1.5"/>
    <property type="match status" value="1"/>
</dbReference>
<dbReference type="Gene3D" id="3.30.30.10">
    <property type="entry name" value="Knottin, scorpion toxin-like"/>
    <property type="match status" value="1"/>
</dbReference>
<dbReference type="InterPro" id="IPR036574">
    <property type="entry name" value="Scorpion_toxin-like_sf"/>
</dbReference>
<dbReference type="PANTHER" id="PTHR33147">
    <property type="entry name" value="DEFENSIN-LIKE PROTEIN 1"/>
    <property type="match status" value="1"/>
</dbReference>
<dbReference type="PANTHER" id="PTHR33147:SF37">
    <property type="entry name" value="DEFENSIN-LIKE PROTEIN 14-RELATED"/>
    <property type="match status" value="1"/>
</dbReference>
<dbReference type="Pfam" id="PF00304">
    <property type="entry name" value="Gamma-thionin"/>
    <property type="match status" value="1"/>
</dbReference>
<dbReference type="SUPFAM" id="SSF57095">
    <property type="entry name" value="Scorpion toxin-like"/>
    <property type="match status" value="1"/>
</dbReference>
<comment type="function">
    <text>Confers broad-spectrum resistance to pathogens.</text>
</comment>
<comment type="subcellular location">
    <subcellularLocation>
        <location evidence="1">Secreted</location>
    </subcellularLocation>
</comment>
<comment type="similarity">
    <text evidence="3">Belongs to the DEFL family.</text>
</comment>
<reference key="1">
    <citation type="journal article" date="2000" name="Nature">
        <title>Sequence and analysis of chromosome 1 of the plant Arabidopsis thaliana.</title>
        <authorList>
            <person name="Theologis A."/>
            <person name="Ecker J.R."/>
            <person name="Palm C.J."/>
            <person name="Federspiel N.A."/>
            <person name="Kaul S."/>
            <person name="White O."/>
            <person name="Alonso J."/>
            <person name="Altafi H."/>
            <person name="Araujo R."/>
            <person name="Bowman C.L."/>
            <person name="Brooks S.Y."/>
            <person name="Buehler E."/>
            <person name="Chan A."/>
            <person name="Chao Q."/>
            <person name="Chen H."/>
            <person name="Cheuk R.F."/>
            <person name="Chin C.W."/>
            <person name="Chung M.K."/>
            <person name="Conn L."/>
            <person name="Conway A.B."/>
            <person name="Conway A.R."/>
            <person name="Creasy T.H."/>
            <person name="Dewar K."/>
            <person name="Dunn P."/>
            <person name="Etgu P."/>
            <person name="Feldblyum T.V."/>
            <person name="Feng J.-D."/>
            <person name="Fong B."/>
            <person name="Fujii C.Y."/>
            <person name="Gill J.E."/>
            <person name="Goldsmith A.D."/>
            <person name="Haas B."/>
            <person name="Hansen N.F."/>
            <person name="Hughes B."/>
            <person name="Huizar L."/>
            <person name="Hunter J.L."/>
            <person name="Jenkins J."/>
            <person name="Johnson-Hopson C."/>
            <person name="Khan S."/>
            <person name="Khaykin E."/>
            <person name="Kim C.J."/>
            <person name="Koo H.L."/>
            <person name="Kremenetskaia I."/>
            <person name="Kurtz D.B."/>
            <person name="Kwan A."/>
            <person name="Lam B."/>
            <person name="Langin-Hooper S."/>
            <person name="Lee A."/>
            <person name="Lee J.M."/>
            <person name="Lenz C.A."/>
            <person name="Li J.H."/>
            <person name="Li Y.-P."/>
            <person name="Lin X."/>
            <person name="Liu S.X."/>
            <person name="Liu Z.A."/>
            <person name="Luros J.S."/>
            <person name="Maiti R."/>
            <person name="Marziali A."/>
            <person name="Militscher J."/>
            <person name="Miranda M."/>
            <person name="Nguyen M."/>
            <person name="Nierman W.C."/>
            <person name="Osborne B.I."/>
            <person name="Pai G."/>
            <person name="Peterson J."/>
            <person name="Pham P.K."/>
            <person name="Rizzo M."/>
            <person name="Rooney T."/>
            <person name="Rowley D."/>
            <person name="Sakano H."/>
            <person name="Salzberg S.L."/>
            <person name="Schwartz J.R."/>
            <person name="Shinn P."/>
            <person name="Southwick A.M."/>
            <person name="Sun H."/>
            <person name="Tallon L.J."/>
            <person name="Tambunga G."/>
            <person name="Toriumi M.J."/>
            <person name="Town C.D."/>
            <person name="Utterback T."/>
            <person name="Van Aken S."/>
            <person name="Vaysberg M."/>
            <person name="Vysotskaia V.S."/>
            <person name="Walker M."/>
            <person name="Wu D."/>
            <person name="Yu G."/>
            <person name="Fraser C.M."/>
            <person name="Venter J.C."/>
            <person name="Davis R.W."/>
        </authorList>
    </citation>
    <scope>NUCLEOTIDE SEQUENCE [LARGE SCALE GENOMIC DNA]</scope>
    <source>
        <strain>cv. Columbia</strain>
    </source>
</reference>
<reference key="2">
    <citation type="journal article" date="2017" name="Plant J.">
        <title>Araport11: a complete reannotation of the Arabidopsis thaliana reference genome.</title>
        <authorList>
            <person name="Cheng C.Y."/>
            <person name="Krishnakumar V."/>
            <person name="Chan A.P."/>
            <person name="Thibaud-Nissen F."/>
            <person name="Schobel S."/>
            <person name="Town C.D."/>
        </authorList>
    </citation>
    <scope>GENOME REANNOTATION</scope>
    <source>
        <strain>cv. Columbia</strain>
    </source>
</reference>
<reference key="3">
    <citation type="journal article" date="2002" name="Planta">
        <title>Plant defensins.</title>
        <authorList>
            <person name="Thomma B.P.H.J."/>
            <person name="Cammue B.P."/>
            <person name="Thevissen K."/>
        </authorList>
    </citation>
    <scope>GENE FAMILY</scope>
    <scope>NOMENCLATURE</scope>
</reference>
<reference key="4">
    <citation type="journal article" date="2005" name="Plant Physiol.">
        <title>Genome organization of more than 300 defensin-like genes in Arabidopsis.</title>
        <authorList>
            <person name="Silverstein K.A.T."/>
            <person name="Graham M.A."/>
            <person name="Paape T.D."/>
            <person name="VandenBosch K.A."/>
        </authorList>
    </citation>
    <scope>GENE FAMILY</scope>
</reference>
<evidence type="ECO:0000250" key="1"/>
<evidence type="ECO:0000255" key="2"/>
<evidence type="ECO:0000305" key="3"/>
<gene>
    <name type="primary">PDF1.5</name>
    <name type="ordered locus">At1g55010</name>
    <name type="ORF">F14C21.57</name>
    <name type="ORF">T24C10.12</name>
</gene>
<proteinExistence type="evidence at transcript level"/>
<keyword id="KW-0929">Antimicrobial</keyword>
<keyword id="KW-1015">Disulfide bond</keyword>
<keyword id="KW-0295">Fungicide</keyword>
<keyword id="KW-0611">Plant defense</keyword>
<keyword id="KW-1185">Reference proteome</keyword>
<keyword id="KW-0964">Secreted</keyword>
<keyword id="KW-0732">Signal</keyword>